<sequence length="402" mass="43062">MRLLHVVVATVSLTGAITSLIAAQHYNVSSDVIGGIEKEDFGVGCNSRTKYPTAADTSKLQPRFAYLITNSLADFIAVHFIKFNLPDNDFVQIRAADPSAVDNRVLRYRGNESNGVFFADALSTKSVIVELFTNASSSAQKTNSSKCVGFAVDSYQYLGEGSTLNGSKEEVCGADNSREASCYSGYTNAFRASNAVVRLLIKKSTGSFFCTGWLIGSEGHLITNNHCISTQSHASNTEFEFMAQGSSCSINCEGARACFGSIRASYATLIYADATLDYALVKLPINLSGQYGYLRLRSSGAVMNERVYVPQHPAGWGKRIAMKSDNGFGTVTSLTMGGCAPNQVAYYLDTQGGSSGSPVLSWSDNAVVALHHCGGCPNTAINSYKLVNDMKWRGILPANACT</sequence>
<keyword id="KW-0325">Glycoprotein</keyword>
<keyword id="KW-0964">Secreted</keyword>
<keyword id="KW-0732">Signal</keyword>
<keyword id="KW-0843">Virulence</keyword>
<proteinExistence type="evidence at transcript level"/>
<name>RLR73_PLAVT</name>
<reference key="1">
    <citation type="journal article" date="2018" name="Front. Plant Sci.">
        <title>In planta functional analysis and subcellular localization of the oomycete pathogen Plasmopara viticola candidate RXLR effector repertoire.</title>
        <authorList>
            <person name="Liu Y."/>
            <person name="Lan X."/>
            <person name="Song S."/>
            <person name="Yin L."/>
            <person name="Dry I.B."/>
            <person name="Qu J."/>
            <person name="Xiang J."/>
            <person name="Lu J."/>
        </authorList>
    </citation>
    <scope>NUCLEOTIDE SEQUENCE [MRNA]</scope>
    <scope>DOMAIN</scope>
    <scope>FUNCTION</scope>
    <scope>SUBCELLULAR LOCATION</scope>
</reference>
<organism>
    <name type="scientific">Plasmopara viticola</name>
    <name type="common">Downy mildew of grapevine</name>
    <name type="synonym">Botrytis viticola</name>
    <dbReference type="NCBI Taxonomy" id="143451"/>
    <lineage>
        <taxon>Eukaryota</taxon>
        <taxon>Sar</taxon>
        <taxon>Stramenopiles</taxon>
        <taxon>Oomycota</taxon>
        <taxon>Peronosporales</taxon>
        <taxon>Peronosporaceae</taxon>
        <taxon>Plasmopara</taxon>
    </lineage>
</organism>
<gene>
    <name evidence="4" type="primary">RXLR73</name>
</gene>
<protein>
    <recommendedName>
        <fullName evidence="4">Secreted RxLR effector protein 73</fullName>
    </recommendedName>
</protein>
<comment type="function">
    <text evidence="3">Secreted effector that completely suppresses the host cell death induced by cell death-inducing proteins.</text>
</comment>
<comment type="subcellular location">
    <subcellularLocation>
        <location evidence="3">Secreted</location>
    </subcellularLocation>
    <subcellularLocation>
        <location evidence="6">Host cell</location>
    </subcellularLocation>
</comment>
<comment type="domain">
    <text evidence="6">Has the canonical translocation RxLR motif, but lacks the canonical EER motif, which characterizes most oomycete effectors identified so far.</text>
</comment>
<comment type="similarity">
    <text evidence="5">Belongs to the RxLR effector family.</text>
</comment>
<evidence type="ECO:0000255" key="1"/>
<evidence type="ECO:0000255" key="2">
    <source>
        <dbReference type="PROSITE-ProRule" id="PRU00498"/>
    </source>
</evidence>
<evidence type="ECO:0000269" key="3">
    <source>
    </source>
</evidence>
<evidence type="ECO:0000303" key="4">
    <source>
    </source>
</evidence>
<evidence type="ECO:0000305" key="5"/>
<evidence type="ECO:0000305" key="6">
    <source>
    </source>
</evidence>
<dbReference type="SMR" id="P0CV23"/>
<dbReference type="GlyCosmos" id="P0CV23">
    <property type="glycosylation" value="6 sites, No reported glycans"/>
</dbReference>
<dbReference type="GO" id="GO:0005576">
    <property type="term" value="C:extracellular region"/>
    <property type="evidence" value="ECO:0007669"/>
    <property type="project" value="UniProtKB-SubCell"/>
</dbReference>
<dbReference type="GO" id="GO:0043657">
    <property type="term" value="C:host cell"/>
    <property type="evidence" value="ECO:0007669"/>
    <property type="project" value="UniProtKB-SubCell"/>
</dbReference>
<dbReference type="Gene3D" id="2.40.10.10">
    <property type="entry name" value="Trypsin-like serine proteases"/>
    <property type="match status" value="2"/>
</dbReference>
<dbReference type="InterPro" id="IPR009003">
    <property type="entry name" value="Peptidase_S1_PA"/>
</dbReference>
<dbReference type="InterPro" id="IPR043504">
    <property type="entry name" value="Peptidase_S1_PA_chymotrypsin"/>
</dbReference>
<dbReference type="PANTHER" id="PTHR36234">
    <property type="entry name" value="LYSYL ENDOPEPTIDASE"/>
    <property type="match status" value="1"/>
</dbReference>
<dbReference type="PANTHER" id="PTHR36234:SF5">
    <property type="entry name" value="LYSYL ENDOPEPTIDASE"/>
    <property type="match status" value="1"/>
</dbReference>
<dbReference type="Pfam" id="PF13365">
    <property type="entry name" value="Trypsin_2"/>
    <property type="match status" value="1"/>
</dbReference>
<dbReference type="SUPFAM" id="SSF50494">
    <property type="entry name" value="Trypsin-like serine proteases"/>
    <property type="match status" value="1"/>
</dbReference>
<feature type="signal peptide" evidence="1">
    <location>
        <begin position="1"/>
        <end position="23"/>
    </location>
</feature>
<feature type="chain" id="PRO_0000447932" description="Secreted RxLR effector protein 73">
    <location>
        <begin position="24"/>
        <end position="402"/>
    </location>
</feature>
<feature type="short sequence motif" description="RxLR" evidence="6">
    <location>
        <begin position="104"/>
        <end position="107"/>
    </location>
</feature>
<feature type="glycosylation site" description="N-linked (GlcNAc...) asparagine" evidence="2">
    <location>
        <position position="27"/>
    </location>
</feature>
<feature type="glycosylation site" description="N-linked (GlcNAc...) asparagine" evidence="2">
    <location>
        <position position="111"/>
    </location>
</feature>
<feature type="glycosylation site" description="N-linked (GlcNAc...) asparagine" evidence="2">
    <location>
        <position position="134"/>
    </location>
</feature>
<feature type="glycosylation site" description="N-linked (GlcNAc...) asparagine" evidence="2">
    <location>
        <position position="143"/>
    </location>
</feature>
<feature type="glycosylation site" description="N-linked (GlcNAc...) asparagine" evidence="2">
    <location>
        <position position="165"/>
    </location>
</feature>
<feature type="glycosylation site" description="N-linked (GlcNAc...) asparagine" evidence="2">
    <location>
        <position position="286"/>
    </location>
</feature>
<accession>P0CV23</accession>